<gene>
    <name type="ordered locus">jhp_0149</name>
</gene>
<sequence>MGRAFEYRRAAKEKRWDKMSKVFPKLAKAITLAAKEGGSEPDTNAKLRTAILNAKAQNMPKDNIDAAIKRASSKEGNLSEITYEGKANFGVLIIMECMTDNPTRTIANLKSYFNKTQGASIVPNGSLEFMFNRKSVFECLKSEVENLKLSLEDLEFALIDYGLEELEEVGDKIIIRGDYNSFKLLNEGFESLRLPIIKAGLQRIATTPIELNDEQMELTEKLLDRIEDDDDVVALYTNIE</sequence>
<feature type="chain" id="PRO_0000175821" description="Probable transcriptional regulatory protein jhp_0149">
    <location>
        <begin position="1"/>
        <end position="240"/>
    </location>
</feature>
<keyword id="KW-0963">Cytoplasm</keyword>
<keyword id="KW-0238">DNA-binding</keyword>
<keyword id="KW-0804">Transcription</keyword>
<keyword id="KW-0805">Transcription regulation</keyword>
<protein>
    <recommendedName>
        <fullName evidence="1">Probable transcriptional regulatory protein jhp_0149</fullName>
    </recommendedName>
</protein>
<comment type="subcellular location">
    <subcellularLocation>
        <location evidence="1">Cytoplasm</location>
    </subcellularLocation>
</comment>
<comment type="similarity">
    <text evidence="1">Belongs to the TACO1 family.</text>
</comment>
<reference key="1">
    <citation type="journal article" date="1999" name="Nature">
        <title>Genomic sequence comparison of two unrelated isolates of the human gastric pathogen Helicobacter pylori.</title>
        <authorList>
            <person name="Alm R.A."/>
            <person name="Ling L.-S.L."/>
            <person name="Moir D.T."/>
            <person name="King B.L."/>
            <person name="Brown E.D."/>
            <person name="Doig P.C."/>
            <person name="Smith D.R."/>
            <person name="Noonan B."/>
            <person name="Guild B.C."/>
            <person name="deJonge B.L."/>
            <person name="Carmel G."/>
            <person name="Tummino P.J."/>
            <person name="Caruso A."/>
            <person name="Uria-Nickelsen M."/>
            <person name="Mills D.M."/>
            <person name="Ives C."/>
            <person name="Gibson R."/>
            <person name="Merberg D."/>
            <person name="Mills S.D."/>
            <person name="Jiang Q."/>
            <person name="Taylor D.E."/>
            <person name="Vovis G.F."/>
            <person name="Trust T.J."/>
        </authorList>
    </citation>
    <scope>NUCLEOTIDE SEQUENCE [LARGE SCALE GENOMIC DNA]</scope>
    <source>
        <strain>J99 / ATCC 700824</strain>
    </source>
</reference>
<name>Y162_HELPJ</name>
<accession>Q9ZMR9</accession>
<dbReference type="EMBL" id="AE001439">
    <property type="protein sequence ID" value="AAD05730.1"/>
    <property type="molecule type" value="Genomic_DNA"/>
</dbReference>
<dbReference type="PIR" id="G71968">
    <property type="entry name" value="G71968"/>
</dbReference>
<dbReference type="RefSeq" id="WP_000532137.1">
    <property type="nucleotide sequence ID" value="NC_000921.1"/>
</dbReference>
<dbReference type="SMR" id="Q9ZMR9"/>
<dbReference type="KEGG" id="hpj:jhp_0149"/>
<dbReference type="PATRIC" id="fig|85963.30.peg.874"/>
<dbReference type="eggNOG" id="COG0217">
    <property type="taxonomic scope" value="Bacteria"/>
</dbReference>
<dbReference type="Proteomes" id="UP000000804">
    <property type="component" value="Chromosome"/>
</dbReference>
<dbReference type="GO" id="GO:0005829">
    <property type="term" value="C:cytosol"/>
    <property type="evidence" value="ECO:0007669"/>
    <property type="project" value="TreeGrafter"/>
</dbReference>
<dbReference type="GO" id="GO:0003677">
    <property type="term" value="F:DNA binding"/>
    <property type="evidence" value="ECO:0007669"/>
    <property type="project" value="UniProtKB-UniRule"/>
</dbReference>
<dbReference type="GO" id="GO:0006355">
    <property type="term" value="P:regulation of DNA-templated transcription"/>
    <property type="evidence" value="ECO:0007669"/>
    <property type="project" value="UniProtKB-UniRule"/>
</dbReference>
<dbReference type="FunFam" id="1.10.10.200:FF:000008">
    <property type="entry name" value="Probable transcriptional regulatory protein HP_0162"/>
    <property type="match status" value="1"/>
</dbReference>
<dbReference type="Gene3D" id="1.10.10.200">
    <property type="match status" value="1"/>
</dbReference>
<dbReference type="Gene3D" id="3.30.70.980">
    <property type="match status" value="2"/>
</dbReference>
<dbReference type="HAMAP" id="MF_00693">
    <property type="entry name" value="Transcrip_reg_TACO1"/>
    <property type="match status" value="1"/>
</dbReference>
<dbReference type="InterPro" id="IPR017856">
    <property type="entry name" value="Integrase-like_N"/>
</dbReference>
<dbReference type="InterPro" id="IPR048300">
    <property type="entry name" value="TACO1_YebC-like_2nd/3rd_dom"/>
</dbReference>
<dbReference type="InterPro" id="IPR049083">
    <property type="entry name" value="TACO1_YebC_N"/>
</dbReference>
<dbReference type="InterPro" id="IPR002876">
    <property type="entry name" value="Transcrip_reg_TACO1-like"/>
</dbReference>
<dbReference type="InterPro" id="IPR026564">
    <property type="entry name" value="Transcrip_reg_TACO1-like_dom3"/>
</dbReference>
<dbReference type="InterPro" id="IPR029072">
    <property type="entry name" value="YebC-like"/>
</dbReference>
<dbReference type="NCBIfam" id="NF009044">
    <property type="entry name" value="PRK12378.1"/>
    <property type="match status" value="1"/>
</dbReference>
<dbReference type="NCBIfam" id="TIGR01033">
    <property type="entry name" value="YebC/PmpR family DNA-binding transcriptional regulator"/>
    <property type="match status" value="1"/>
</dbReference>
<dbReference type="PANTHER" id="PTHR12532:SF6">
    <property type="entry name" value="TRANSCRIPTIONAL REGULATORY PROTEIN YEBC-RELATED"/>
    <property type="match status" value="1"/>
</dbReference>
<dbReference type="PANTHER" id="PTHR12532">
    <property type="entry name" value="TRANSLATIONAL ACTIVATOR OF CYTOCHROME C OXIDASE 1"/>
    <property type="match status" value="1"/>
</dbReference>
<dbReference type="Pfam" id="PF20772">
    <property type="entry name" value="TACO1_YebC_N"/>
    <property type="match status" value="1"/>
</dbReference>
<dbReference type="Pfam" id="PF01709">
    <property type="entry name" value="Transcrip_reg"/>
    <property type="match status" value="1"/>
</dbReference>
<dbReference type="SUPFAM" id="SSF75625">
    <property type="entry name" value="YebC-like"/>
    <property type="match status" value="1"/>
</dbReference>
<proteinExistence type="inferred from homology"/>
<organism>
    <name type="scientific">Helicobacter pylori (strain J99 / ATCC 700824)</name>
    <name type="common">Campylobacter pylori J99</name>
    <dbReference type="NCBI Taxonomy" id="85963"/>
    <lineage>
        <taxon>Bacteria</taxon>
        <taxon>Pseudomonadati</taxon>
        <taxon>Campylobacterota</taxon>
        <taxon>Epsilonproteobacteria</taxon>
        <taxon>Campylobacterales</taxon>
        <taxon>Helicobacteraceae</taxon>
        <taxon>Helicobacter</taxon>
    </lineage>
</organism>
<evidence type="ECO:0000255" key="1">
    <source>
        <dbReference type="HAMAP-Rule" id="MF_00693"/>
    </source>
</evidence>